<name>UBID_CUPPJ</name>
<reference key="1">
    <citation type="journal article" date="2010" name="PLoS ONE">
        <title>The complete multipartite genome sequence of Cupriavidus necator JMP134, a versatile pollutant degrader.</title>
        <authorList>
            <person name="Lykidis A."/>
            <person name="Perez-Pantoja D."/>
            <person name="Ledger T."/>
            <person name="Mavromatis K."/>
            <person name="Anderson I.J."/>
            <person name="Ivanova N.N."/>
            <person name="Hooper S.D."/>
            <person name="Lapidus A."/>
            <person name="Lucas S."/>
            <person name="Gonzalez B."/>
            <person name="Kyrpides N.C."/>
        </authorList>
    </citation>
    <scope>NUCLEOTIDE SEQUENCE [LARGE SCALE GENOMIC DNA]</scope>
    <source>
        <strain>JMP134 / LMG 1197</strain>
    </source>
</reference>
<proteinExistence type="inferred from homology"/>
<protein>
    <recommendedName>
        <fullName evidence="1">3-octaprenyl-4-hydroxybenzoate carboxy-lyase</fullName>
        <ecNumber evidence="1">4.1.1.98</ecNumber>
    </recommendedName>
    <alternativeName>
        <fullName evidence="1">Polyprenyl p-hydroxybenzoate decarboxylase</fullName>
    </alternativeName>
</protein>
<keyword id="KW-1003">Cell membrane</keyword>
<keyword id="KW-0210">Decarboxylase</keyword>
<keyword id="KW-0285">Flavoprotein</keyword>
<keyword id="KW-0288">FMN</keyword>
<keyword id="KW-0456">Lyase</keyword>
<keyword id="KW-0464">Manganese</keyword>
<keyword id="KW-0472">Membrane</keyword>
<keyword id="KW-0479">Metal-binding</keyword>
<keyword id="KW-0831">Ubiquinone biosynthesis</keyword>
<organism>
    <name type="scientific">Cupriavidus pinatubonensis (strain JMP 134 / LMG 1197)</name>
    <name type="common">Cupriavidus necator (strain JMP 134)</name>
    <dbReference type="NCBI Taxonomy" id="264198"/>
    <lineage>
        <taxon>Bacteria</taxon>
        <taxon>Pseudomonadati</taxon>
        <taxon>Pseudomonadota</taxon>
        <taxon>Betaproteobacteria</taxon>
        <taxon>Burkholderiales</taxon>
        <taxon>Burkholderiaceae</taxon>
        <taxon>Cupriavidus</taxon>
    </lineage>
</organism>
<dbReference type="EC" id="4.1.1.98" evidence="1"/>
<dbReference type="EMBL" id="CP000090">
    <property type="protein sequence ID" value="AAZ60145.1"/>
    <property type="status" value="ALT_INIT"/>
    <property type="molecule type" value="Genomic_DNA"/>
</dbReference>
<dbReference type="SMR" id="Q474N8"/>
<dbReference type="STRING" id="264198.Reut_A0765"/>
<dbReference type="KEGG" id="reu:Reut_A0765"/>
<dbReference type="eggNOG" id="COG0043">
    <property type="taxonomic scope" value="Bacteria"/>
</dbReference>
<dbReference type="HOGENOM" id="CLU_023348_4_1_4"/>
<dbReference type="OrthoDB" id="9809841at2"/>
<dbReference type="UniPathway" id="UPA00232"/>
<dbReference type="GO" id="GO:0005829">
    <property type="term" value="C:cytosol"/>
    <property type="evidence" value="ECO:0007669"/>
    <property type="project" value="TreeGrafter"/>
</dbReference>
<dbReference type="GO" id="GO:0005886">
    <property type="term" value="C:plasma membrane"/>
    <property type="evidence" value="ECO:0007669"/>
    <property type="project" value="UniProtKB-SubCell"/>
</dbReference>
<dbReference type="GO" id="GO:0008694">
    <property type="term" value="F:3-octaprenyl-4-hydroxybenzoate carboxy-lyase activity"/>
    <property type="evidence" value="ECO:0007669"/>
    <property type="project" value="UniProtKB-UniRule"/>
</dbReference>
<dbReference type="GO" id="GO:0046872">
    <property type="term" value="F:metal ion binding"/>
    <property type="evidence" value="ECO:0007669"/>
    <property type="project" value="UniProtKB-KW"/>
</dbReference>
<dbReference type="GO" id="GO:0006744">
    <property type="term" value="P:ubiquinone biosynthetic process"/>
    <property type="evidence" value="ECO:0007669"/>
    <property type="project" value="UniProtKB-UniRule"/>
</dbReference>
<dbReference type="FunFam" id="3.40.1670.10:FF:000001">
    <property type="entry name" value="3-octaprenyl-4-hydroxybenzoate carboxy-lyase"/>
    <property type="match status" value="1"/>
</dbReference>
<dbReference type="Gene3D" id="1.20.5.570">
    <property type="entry name" value="Single helix bin"/>
    <property type="match status" value="1"/>
</dbReference>
<dbReference type="Gene3D" id="3.40.1670.10">
    <property type="entry name" value="UbiD C-terminal domain-like"/>
    <property type="match status" value="1"/>
</dbReference>
<dbReference type="HAMAP" id="MF_01636">
    <property type="entry name" value="UbiD"/>
    <property type="match status" value="1"/>
</dbReference>
<dbReference type="InterPro" id="IPR002830">
    <property type="entry name" value="UbiD"/>
</dbReference>
<dbReference type="InterPro" id="IPR049381">
    <property type="entry name" value="UbiD-like_C"/>
</dbReference>
<dbReference type="InterPro" id="IPR049383">
    <property type="entry name" value="UbiD-like_N"/>
</dbReference>
<dbReference type="InterPro" id="IPR023677">
    <property type="entry name" value="UbiD_bacteria"/>
</dbReference>
<dbReference type="InterPro" id="IPR048304">
    <property type="entry name" value="UbiD_Rift_dom"/>
</dbReference>
<dbReference type="NCBIfam" id="NF008175">
    <property type="entry name" value="PRK10922.1"/>
    <property type="match status" value="1"/>
</dbReference>
<dbReference type="NCBIfam" id="TIGR00148">
    <property type="entry name" value="UbiD family decarboxylase"/>
    <property type="match status" value="1"/>
</dbReference>
<dbReference type="PANTHER" id="PTHR30108">
    <property type="entry name" value="3-OCTAPRENYL-4-HYDROXYBENZOATE CARBOXY-LYASE-RELATED"/>
    <property type="match status" value="1"/>
</dbReference>
<dbReference type="PANTHER" id="PTHR30108:SF17">
    <property type="entry name" value="FERULIC ACID DECARBOXYLASE 1"/>
    <property type="match status" value="1"/>
</dbReference>
<dbReference type="Pfam" id="PF01977">
    <property type="entry name" value="UbiD"/>
    <property type="match status" value="1"/>
</dbReference>
<dbReference type="Pfam" id="PF20696">
    <property type="entry name" value="UbiD_C"/>
    <property type="match status" value="1"/>
</dbReference>
<dbReference type="Pfam" id="PF20695">
    <property type="entry name" value="UbiD_N"/>
    <property type="match status" value="1"/>
</dbReference>
<dbReference type="SUPFAM" id="SSF50475">
    <property type="entry name" value="FMN-binding split barrel"/>
    <property type="match status" value="1"/>
</dbReference>
<dbReference type="SUPFAM" id="SSF143968">
    <property type="entry name" value="UbiD C-terminal domain-like"/>
    <property type="match status" value="1"/>
</dbReference>
<comment type="function">
    <text evidence="1">Catalyzes the decarboxylation of 3-octaprenyl-4-hydroxy benzoate to 2-octaprenylphenol, an intermediate step in ubiquinone biosynthesis.</text>
</comment>
<comment type="catalytic activity">
    <reaction evidence="1">
        <text>a 4-hydroxy-3-(all-trans-polyprenyl)benzoate + H(+) = a 2-(all-trans-polyprenyl)phenol + CO2</text>
        <dbReference type="Rhea" id="RHEA:41680"/>
        <dbReference type="Rhea" id="RHEA-COMP:9514"/>
        <dbReference type="Rhea" id="RHEA-COMP:9516"/>
        <dbReference type="ChEBI" id="CHEBI:1269"/>
        <dbReference type="ChEBI" id="CHEBI:15378"/>
        <dbReference type="ChEBI" id="CHEBI:16526"/>
        <dbReference type="ChEBI" id="CHEBI:78396"/>
        <dbReference type="EC" id="4.1.1.98"/>
    </reaction>
</comment>
<comment type="cofactor">
    <cofactor evidence="1">
        <name>prenylated FMN</name>
        <dbReference type="ChEBI" id="CHEBI:87746"/>
    </cofactor>
    <text evidence="1">Binds 1 prenylated FMN per subunit.</text>
</comment>
<comment type="cofactor">
    <cofactor evidence="1">
        <name>Mn(2+)</name>
        <dbReference type="ChEBI" id="CHEBI:29035"/>
    </cofactor>
</comment>
<comment type="pathway">
    <text evidence="1">Cofactor biosynthesis; ubiquinone biosynthesis.</text>
</comment>
<comment type="subunit">
    <text evidence="1">Homohexamer.</text>
</comment>
<comment type="subcellular location">
    <subcellularLocation>
        <location evidence="1">Cell membrane</location>
        <topology evidence="1">Peripheral membrane protein</topology>
    </subcellularLocation>
</comment>
<comment type="similarity">
    <text evidence="1">Belongs to the UbiD family.</text>
</comment>
<comment type="sequence caution" evidence="2">
    <conflict type="erroneous initiation">
        <sequence resource="EMBL-CDS" id="AAZ60145"/>
    </conflict>
</comment>
<accession>Q474N8</accession>
<evidence type="ECO:0000255" key="1">
    <source>
        <dbReference type="HAMAP-Rule" id="MF_01636"/>
    </source>
</evidence>
<evidence type="ECO:0000305" key="2"/>
<feature type="chain" id="PRO_0000267686" description="3-octaprenyl-4-hydroxybenzoate carboxy-lyase">
    <location>
        <begin position="1"/>
        <end position="509"/>
    </location>
</feature>
<feature type="active site" description="Proton donor" evidence="1">
    <location>
        <position position="304"/>
    </location>
</feature>
<feature type="binding site" evidence="1">
    <location>
        <position position="179"/>
    </location>
    <ligand>
        <name>Mn(2+)</name>
        <dbReference type="ChEBI" id="CHEBI:29035"/>
    </ligand>
</feature>
<feature type="binding site" evidence="1">
    <location>
        <begin position="182"/>
        <end position="184"/>
    </location>
    <ligand>
        <name>prenylated FMN</name>
        <dbReference type="ChEBI" id="CHEBI:87746"/>
    </ligand>
</feature>
<feature type="binding site" evidence="1">
    <location>
        <begin position="196"/>
        <end position="198"/>
    </location>
    <ligand>
        <name>prenylated FMN</name>
        <dbReference type="ChEBI" id="CHEBI:87746"/>
    </ligand>
</feature>
<feature type="binding site" evidence="1">
    <location>
        <begin position="201"/>
        <end position="202"/>
    </location>
    <ligand>
        <name>prenylated FMN</name>
        <dbReference type="ChEBI" id="CHEBI:87746"/>
    </ligand>
</feature>
<feature type="binding site" evidence="1">
    <location>
        <position position="245"/>
    </location>
    <ligand>
        <name>Mn(2+)</name>
        <dbReference type="ChEBI" id="CHEBI:29035"/>
    </ligand>
</feature>
<sequence length="509" mass="56525">MQYKDLRDFISQLEQLGELRRVSTPVSPNLEMTEICDRLLRAGGPAVLFERPAGFRSPEGTYSVPVLANLFGTTHRVALGMGAQSLEDLRDIGRVLSALKEPEPPRGLREAGKLFTLAKSVWDMAPKRVSSPACQEIVWEGNDVDLARLPIQTCWPGDAAPLITWGLVVTKGPHKKRQNLGIYRQQVISRNQVIMRWLAHRGGALDFREHALANPGKPFPIAVALGADPATILGAVTPVPDTLSEYQFAGLLRGSRTALAGCLTPTLSELSVPASAEIVLEGHIQPDPDHPSGYQHALEGPYGDHTGYYNEQDWFPVFTIDRITMRRDPIYHSTYTGKPPDEPAVLGVALNEVFVPLLQKQFPEITDFYLPPEGCSYRMALVRMKKQYAGHAKRVMFGVWSFLRQFMYTKFIVVVDDDVDVRDWKEVIWAITTRVDPARDTVLVENTPIDYLDFASPVSGLGSKMGIDATDKWPGETTREWGRTISMDPAVKAKVDGMMATLFDRPAGT</sequence>
<gene>
    <name evidence="1" type="primary">ubiD</name>
    <name type="ordered locus">Reut_A0765</name>
</gene>